<comment type="function">
    <text evidence="1">Binds the 23S rRNA.</text>
</comment>
<comment type="cofactor">
    <cofactor evidence="1">
        <name>Zn(2+)</name>
        <dbReference type="ChEBI" id="CHEBI:29105"/>
    </cofactor>
    <text evidence="1">Binds 1 zinc ion per subunit.</text>
</comment>
<comment type="subunit">
    <text evidence="1">Part of the 50S ribosomal subunit.</text>
</comment>
<comment type="similarity">
    <text evidence="1">Belongs to the bacterial ribosomal protein bL31 family. Type A subfamily.</text>
</comment>
<gene>
    <name evidence="1" type="primary">rpmE</name>
    <name type="ordered locus">JJD26997_0170</name>
</gene>
<protein>
    <recommendedName>
        <fullName evidence="1">Large ribosomal subunit protein bL31</fullName>
    </recommendedName>
    <alternativeName>
        <fullName evidence="2">50S ribosomal protein L31</fullName>
    </alternativeName>
</protein>
<organism>
    <name type="scientific">Campylobacter jejuni subsp. doylei (strain ATCC BAA-1458 / RM4099 / 269.97)</name>
    <dbReference type="NCBI Taxonomy" id="360109"/>
    <lineage>
        <taxon>Bacteria</taxon>
        <taxon>Pseudomonadati</taxon>
        <taxon>Campylobacterota</taxon>
        <taxon>Epsilonproteobacteria</taxon>
        <taxon>Campylobacterales</taxon>
        <taxon>Campylobacteraceae</taxon>
        <taxon>Campylobacter</taxon>
    </lineage>
</organism>
<accession>A7H1N3</accession>
<sequence length="65" mass="7319">MKKEIHPEYVECKVSCACGNTFATKSNKAELRVDICSNCHPFFTGSEKIVDAAGRVEKFKKKYAM</sequence>
<reference key="1">
    <citation type="submission" date="2007-07" db="EMBL/GenBank/DDBJ databases">
        <title>Complete genome sequence of Campylobacter jejuni subsp doylei 269.97 isolated from human blood.</title>
        <authorList>
            <person name="Fouts D.E."/>
            <person name="Mongodin E.F."/>
            <person name="Puiu D."/>
            <person name="Sebastian Y."/>
            <person name="Miller W.G."/>
            <person name="Mandrell R.E."/>
            <person name="Lastovica A.J."/>
            <person name="Nelson K.E."/>
        </authorList>
    </citation>
    <scope>NUCLEOTIDE SEQUENCE [LARGE SCALE GENOMIC DNA]</scope>
    <source>
        <strain>ATCC BAA-1458 / RM4099 / 269.97</strain>
    </source>
</reference>
<evidence type="ECO:0000255" key="1">
    <source>
        <dbReference type="HAMAP-Rule" id="MF_00501"/>
    </source>
</evidence>
<evidence type="ECO:0000305" key="2"/>
<proteinExistence type="inferred from homology"/>
<feature type="chain" id="PRO_1000126582" description="Large ribosomal subunit protein bL31">
    <location>
        <begin position="1"/>
        <end position="65"/>
    </location>
</feature>
<feature type="binding site" evidence="1">
    <location>
        <position position="16"/>
    </location>
    <ligand>
        <name>Zn(2+)</name>
        <dbReference type="ChEBI" id="CHEBI:29105"/>
    </ligand>
</feature>
<feature type="binding site" evidence="1">
    <location>
        <position position="18"/>
    </location>
    <ligand>
        <name>Zn(2+)</name>
        <dbReference type="ChEBI" id="CHEBI:29105"/>
    </ligand>
</feature>
<feature type="binding site" evidence="1">
    <location>
        <position position="36"/>
    </location>
    <ligand>
        <name>Zn(2+)</name>
        <dbReference type="ChEBI" id="CHEBI:29105"/>
    </ligand>
</feature>
<feature type="binding site" evidence="1">
    <location>
        <position position="39"/>
    </location>
    <ligand>
        <name>Zn(2+)</name>
        <dbReference type="ChEBI" id="CHEBI:29105"/>
    </ligand>
</feature>
<name>RL31_CAMJD</name>
<dbReference type="EMBL" id="CP000768">
    <property type="protein sequence ID" value="ABS44112.1"/>
    <property type="molecule type" value="Genomic_DNA"/>
</dbReference>
<dbReference type="SMR" id="A7H1N3"/>
<dbReference type="KEGG" id="cjd:JJD26997_0170"/>
<dbReference type="HOGENOM" id="CLU_114306_4_3_7"/>
<dbReference type="Proteomes" id="UP000002302">
    <property type="component" value="Chromosome"/>
</dbReference>
<dbReference type="GO" id="GO:1990904">
    <property type="term" value="C:ribonucleoprotein complex"/>
    <property type="evidence" value="ECO:0007669"/>
    <property type="project" value="UniProtKB-KW"/>
</dbReference>
<dbReference type="GO" id="GO:0005840">
    <property type="term" value="C:ribosome"/>
    <property type="evidence" value="ECO:0007669"/>
    <property type="project" value="UniProtKB-KW"/>
</dbReference>
<dbReference type="GO" id="GO:0046872">
    <property type="term" value="F:metal ion binding"/>
    <property type="evidence" value="ECO:0007669"/>
    <property type="project" value="UniProtKB-KW"/>
</dbReference>
<dbReference type="GO" id="GO:0019843">
    <property type="term" value="F:rRNA binding"/>
    <property type="evidence" value="ECO:0007669"/>
    <property type="project" value="UniProtKB-KW"/>
</dbReference>
<dbReference type="GO" id="GO:0003735">
    <property type="term" value="F:structural constituent of ribosome"/>
    <property type="evidence" value="ECO:0007669"/>
    <property type="project" value="InterPro"/>
</dbReference>
<dbReference type="GO" id="GO:0006412">
    <property type="term" value="P:translation"/>
    <property type="evidence" value="ECO:0007669"/>
    <property type="project" value="UniProtKB-UniRule"/>
</dbReference>
<dbReference type="Gene3D" id="4.10.830.30">
    <property type="entry name" value="Ribosomal protein L31"/>
    <property type="match status" value="1"/>
</dbReference>
<dbReference type="HAMAP" id="MF_00501">
    <property type="entry name" value="Ribosomal_bL31_1"/>
    <property type="match status" value="1"/>
</dbReference>
<dbReference type="InterPro" id="IPR034704">
    <property type="entry name" value="Ribosomal_bL28/bL31-like_sf"/>
</dbReference>
<dbReference type="InterPro" id="IPR002150">
    <property type="entry name" value="Ribosomal_bL31"/>
</dbReference>
<dbReference type="InterPro" id="IPR027491">
    <property type="entry name" value="Ribosomal_bL31_A"/>
</dbReference>
<dbReference type="InterPro" id="IPR042105">
    <property type="entry name" value="Ribosomal_bL31_sf"/>
</dbReference>
<dbReference type="NCBIfam" id="TIGR00105">
    <property type="entry name" value="L31"/>
    <property type="match status" value="1"/>
</dbReference>
<dbReference type="NCBIfam" id="NF000612">
    <property type="entry name" value="PRK00019.1"/>
    <property type="match status" value="1"/>
</dbReference>
<dbReference type="NCBIfam" id="NF001809">
    <property type="entry name" value="PRK00528.1"/>
    <property type="match status" value="1"/>
</dbReference>
<dbReference type="PANTHER" id="PTHR33280">
    <property type="entry name" value="50S RIBOSOMAL PROTEIN L31, CHLOROPLASTIC"/>
    <property type="match status" value="1"/>
</dbReference>
<dbReference type="PANTHER" id="PTHR33280:SF1">
    <property type="entry name" value="LARGE RIBOSOMAL SUBUNIT PROTEIN BL31C"/>
    <property type="match status" value="1"/>
</dbReference>
<dbReference type="Pfam" id="PF01197">
    <property type="entry name" value="Ribosomal_L31"/>
    <property type="match status" value="1"/>
</dbReference>
<dbReference type="PRINTS" id="PR01249">
    <property type="entry name" value="RIBOSOMALL31"/>
</dbReference>
<dbReference type="SUPFAM" id="SSF143800">
    <property type="entry name" value="L28p-like"/>
    <property type="match status" value="1"/>
</dbReference>
<dbReference type="PROSITE" id="PS01143">
    <property type="entry name" value="RIBOSOMAL_L31"/>
    <property type="match status" value="1"/>
</dbReference>
<keyword id="KW-0479">Metal-binding</keyword>
<keyword id="KW-0687">Ribonucleoprotein</keyword>
<keyword id="KW-0689">Ribosomal protein</keyword>
<keyword id="KW-0694">RNA-binding</keyword>
<keyword id="KW-0699">rRNA-binding</keyword>
<keyword id="KW-0862">Zinc</keyword>